<accession>Q6AHI4</accession>
<gene>
    <name evidence="1" type="primary">fluC2</name>
    <name evidence="1" type="synonym">crcB2</name>
    <name type="ordered locus">Lxx00690</name>
</gene>
<reference key="1">
    <citation type="journal article" date="2004" name="Mol. Plant Microbe Interact.">
        <title>The genome sequence of the Gram-positive sugarcane pathogen Leifsonia xyli subsp. xyli.</title>
        <authorList>
            <person name="Monteiro-Vitorello C.B."/>
            <person name="Camargo L.E.A."/>
            <person name="Van Sluys M.A."/>
            <person name="Kitajima J.P."/>
            <person name="Truffi D."/>
            <person name="do Amaral A.M."/>
            <person name="Harakava R."/>
            <person name="de Oliveira J.C.F."/>
            <person name="Wood D."/>
            <person name="de Oliveira M.C."/>
            <person name="Miyaki C.Y."/>
            <person name="Takita M.A."/>
            <person name="da Silva A.C.R."/>
            <person name="Furlan L.R."/>
            <person name="Carraro D.M."/>
            <person name="Camarotte G."/>
            <person name="Almeida N.F. Jr."/>
            <person name="Carrer H."/>
            <person name="Coutinho L.L."/>
            <person name="El-Dorry H.A."/>
            <person name="Ferro M.I.T."/>
            <person name="Gagliardi P.R."/>
            <person name="Giglioti E."/>
            <person name="Goldman M.H.S."/>
            <person name="Goldman G.H."/>
            <person name="Kimura E.T."/>
            <person name="Ferro E.S."/>
            <person name="Kuramae E.E."/>
            <person name="Lemos E.G.M."/>
            <person name="Lemos M.V.F."/>
            <person name="Mauro S.M.Z."/>
            <person name="Machado M.A."/>
            <person name="Marino C.L."/>
            <person name="Menck C.F."/>
            <person name="Nunes L.R."/>
            <person name="Oliveira R.C."/>
            <person name="Pereira G.G."/>
            <person name="Siqueira W."/>
            <person name="de Souza A.A."/>
            <person name="Tsai S.M."/>
            <person name="Zanca A.S."/>
            <person name="Simpson A.J.G."/>
            <person name="Brumbley S.M."/>
            <person name="Setubal J.C."/>
        </authorList>
    </citation>
    <scope>NUCLEOTIDE SEQUENCE [LARGE SCALE GENOMIC DNA]</scope>
    <source>
        <strain>CTCB07</strain>
    </source>
</reference>
<keyword id="KW-1003">Cell membrane</keyword>
<keyword id="KW-0407">Ion channel</keyword>
<keyword id="KW-0406">Ion transport</keyword>
<keyword id="KW-0472">Membrane</keyword>
<keyword id="KW-0479">Metal-binding</keyword>
<keyword id="KW-1185">Reference proteome</keyword>
<keyword id="KW-0915">Sodium</keyword>
<keyword id="KW-0812">Transmembrane</keyword>
<keyword id="KW-1133">Transmembrane helix</keyword>
<keyword id="KW-0813">Transport</keyword>
<evidence type="ECO:0000255" key="1">
    <source>
        <dbReference type="HAMAP-Rule" id="MF_00454"/>
    </source>
</evidence>
<comment type="function">
    <text evidence="1">Fluoride-specific ion channel. Important for reducing fluoride concentration in the cell, thus reducing its toxicity.</text>
</comment>
<comment type="catalytic activity">
    <reaction evidence="1">
        <text>fluoride(in) = fluoride(out)</text>
        <dbReference type="Rhea" id="RHEA:76159"/>
        <dbReference type="ChEBI" id="CHEBI:17051"/>
    </reaction>
    <physiologicalReaction direction="left-to-right" evidence="1">
        <dbReference type="Rhea" id="RHEA:76160"/>
    </physiologicalReaction>
</comment>
<comment type="activity regulation">
    <text evidence="1">Na(+) is not transported, but it plays an essential structural role and its presence is essential for fluoride channel function.</text>
</comment>
<comment type="subcellular location">
    <subcellularLocation>
        <location evidence="1">Cell membrane</location>
        <topology evidence="1">Multi-pass membrane protein</topology>
    </subcellularLocation>
</comment>
<comment type="similarity">
    <text evidence="1">Belongs to the fluoride channel Fluc/FEX (TC 1.A.43) family.</text>
</comment>
<proteinExistence type="inferred from homology"/>
<organism>
    <name type="scientific">Leifsonia xyli subsp. xyli (strain CTCB07)</name>
    <dbReference type="NCBI Taxonomy" id="281090"/>
    <lineage>
        <taxon>Bacteria</taxon>
        <taxon>Bacillati</taxon>
        <taxon>Actinomycetota</taxon>
        <taxon>Actinomycetes</taxon>
        <taxon>Micrococcales</taxon>
        <taxon>Microbacteriaceae</taxon>
        <taxon>Leifsonia</taxon>
    </lineage>
</organism>
<name>FLUC2_LEIXX</name>
<protein>
    <recommendedName>
        <fullName evidence="1">Fluoride-specific ion channel FluC 2</fullName>
    </recommendedName>
</protein>
<sequence length="145" mass="14588">MSRRSSFPVHLHGRSMLLVFVGGALGTAARALLSAAAPTVAVISVITFVINVIGAFVLGWLLESLALRGPDEGRRRDVRLFAGTGVLGGFTTYSAFAVDTDGLIVASNVGGGILYAAATIAIGAAAYLAGIALGAAIGCRRGVSA</sequence>
<feature type="chain" id="PRO_0000110122" description="Fluoride-specific ion channel FluC 2">
    <location>
        <begin position="1"/>
        <end position="145"/>
    </location>
</feature>
<feature type="transmembrane region" description="Helical" evidence="1">
    <location>
        <begin position="16"/>
        <end position="36"/>
    </location>
</feature>
<feature type="transmembrane region" description="Helical" evidence="1">
    <location>
        <begin position="42"/>
        <end position="62"/>
    </location>
</feature>
<feature type="transmembrane region" description="Helical" evidence="1">
    <location>
        <begin position="80"/>
        <end position="100"/>
    </location>
</feature>
<feature type="transmembrane region" description="Helical" evidence="1">
    <location>
        <begin position="113"/>
        <end position="133"/>
    </location>
</feature>
<feature type="binding site" evidence="1">
    <location>
        <position position="88"/>
    </location>
    <ligand>
        <name>Na(+)</name>
        <dbReference type="ChEBI" id="CHEBI:29101"/>
        <note>structural</note>
    </ligand>
</feature>
<feature type="binding site" evidence="1">
    <location>
        <position position="91"/>
    </location>
    <ligand>
        <name>Na(+)</name>
        <dbReference type="ChEBI" id="CHEBI:29101"/>
        <note>structural</note>
    </ligand>
</feature>
<dbReference type="EMBL" id="AE016822">
    <property type="protein sequence ID" value="AAT88161.1"/>
    <property type="molecule type" value="Genomic_DNA"/>
</dbReference>
<dbReference type="SMR" id="Q6AHI4"/>
<dbReference type="STRING" id="281090.Lxx00690"/>
<dbReference type="KEGG" id="lxx:Lxx00690"/>
<dbReference type="eggNOG" id="COG0239">
    <property type="taxonomic scope" value="Bacteria"/>
</dbReference>
<dbReference type="HOGENOM" id="CLU_114342_1_1_11"/>
<dbReference type="Proteomes" id="UP000001306">
    <property type="component" value="Chromosome"/>
</dbReference>
<dbReference type="GO" id="GO:0005886">
    <property type="term" value="C:plasma membrane"/>
    <property type="evidence" value="ECO:0007669"/>
    <property type="project" value="UniProtKB-SubCell"/>
</dbReference>
<dbReference type="GO" id="GO:0062054">
    <property type="term" value="F:fluoride channel activity"/>
    <property type="evidence" value="ECO:0007669"/>
    <property type="project" value="UniProtKB-UniRule"/>
</dbReference>
<dbReference type="GO" id="GO:0046872">
    <property type="term" value="F:metal ion binding"/>
    <property type="evidence" value="ECO:0007669"/>
    <property type="project" value="UniProtKB-KW"/>
</dbReference>
<dbReference type="GO" id="GO:0140114">
    <property type="term" value="P:cellular detoxification of fluoride"/>
    <property type="evidence" value="ECO:0007669"/>
    <property type="project" value="UniProtKB-UniRule"/>
</dbReference>
<dbReference type="HAMAP" id="MF_00454">
    <property type="entry name" value="FluC"/>
    <property type="match status" value="1"/>
</dbReference>
<dbReference type="InterPro" id="IPR003691">
    <property type="entry name" value="FluC"/>
</dbReference>
<dbReference type="PANTHER" id="PTHR28259">
    <property type="entry name" value="FLUORIDE EXPORT PROTEIN 1-RELATED"/>
    <property type="match status" value="1"/>
</dbReference>
<dbReference type="PANTHER" id="PTHR28259:SF1">
    <property type="entry name" value="FLUORIDE EXPORT PROTEIN 1-RELATED"/>
    <property type="match status" value="1"/>
</dbReference>
<dbReference type="Pfam" id="PF02537">
    <property type="entry name" value="CRCB"/>
    <property type="match status" value="1"/>
</dbReference>